<protein>
    <recommendedName>
        <fullName>ABC transporter G family member 42</fullName>
        <shortName>ABC transporter ABCG.42</shortName>
        <shortName>AtABCG42</shortName>
    </recommendedName>
    <alternativeName>
        <fullName>Pleiotropic drug resistance protein 14</fullName>
    </alternativeName>
</protein>
<name>AB42G_ARATH</name>
<sequence length="1392" mass="158222">MTMSQTDGVEFASRNTNENGHDDDDQLRSQWVAIERSPTFERITTALFCKRDEKGKKSQRRVMDVSKLDDLDRRLFIDDLIRHVENDNHVLLQKIRKRIDEVGIDLPKIEARFSDLFVEAECEVVYGKPIPTLWNAISSKLSRFMCSNQAKKISILKGVSGIIRPKRMTLLLGPPSCGKTTLLLALSGRLDPSLKTRGDISYNGHLFSEFVPEKTSSYVSQNDLHIPELSVRETLDFSGCFQGTGSRLEMTKEISRREKLKGIVPDPDIDAYMKAASIEGSKTNLQTDYILKILGLTICADTRVGDASRPGISGGQKRRLTTGEMIVGPIKTLFMDEISNGLDSSTTFQILSCLQQFARLSEGTILVSLLQPAPETFELFDDLILMGEGKIIYHGPRDFVCSFFEDCGFKCPNRKSVAEFLQEVISRKDQEQYWCHIEKTYCYVSIESFIEKFKKSDLGLELQDRLSKTYDKSQTQKDGLCFRKYSLSNWDMLKACSRREFLLMKRNSFVYVFKSGLLIFIGFIAMTVYLRTGSTRDSLHANYLMGSLFFSLFKLLADGLPELTLTISRIAVFCKQKELYFYPAWAYAIPSAILKIPISFLESFLWTMLTYYVIGYSPEMGRFIRQFLILFALHLSCISMFRAIAAVFRDFVVATTVGSISIVLLSVFGGFIVRKPSMPSWLEWGFWLSPLSYAEIGLTANEFFAPRWGKITSENRTLGEQVLDARGLNFGNQSYWNAFGALIGFTLFFNTVFALALTFLKTSQRSRVIVSHEKNTQSSENDSKIASRFKNALPFEPLTFTFQDVQYIIETPQGKKLQLLSGVTGAFKPGVLTALMGVSGAGKTTLLDVLSGRKTFGDIKGQIEVGGYVKVQDTFSRVSGYCEQFDIHSPNLTVQESLKYSAWLRLTSNISSETKCAIVNEVLETIELEEIKDSIVGIPGISGLTTEQRKRLTIAVELVSNPSIIFMDEPTTGLDARAAAIVMRAVKNIAETGRTVVCTIHQPSIDIFEAFDELILMKNGGKIIYYGPLGQHSSKVIEYFMRIHGVPKLKENSNPATWILDITSKSSEDKLGVDLAQMYEESTLFKENKMVIEQTRCTSLGSERLILSSRYAQTSWEQFKACLWKQHLSYWRNPSYNLTRIIFMSFTCMLCGILFWQKAKEINNQQDLFNVFGSMFTVVLFSGINNCSTVLFSVATERNVFYRERFSRMYNSWAYSLAQVLVEIPYSLFQSIVYVIIVYPMVGYHWSVFKVFWSFYSIFCTLLIFNYFGMLLVVVTPNVHIAFTLRSSFYAIVNLFAGYVMPKPNIPRWWIWMYYLSPTSWVLNGLLTSQYGDMEKEILAFGEKKKVSDFLEDYFGYRYDSLALVAVVLIAFPILLASLFAFFIGKLNFQKK</sequence>
<dbReference type="EMBL" id="AL161541">
    <property type="status" value="NOT_ANNOTATED_CDS"/>
    <property type="molecule type" value="Genomic_DNA"/>
</dbReference>
<dbReference type="EMBL" id="CP002687">
    <property type="protein sequence ID" value="AEE83572.2"/>
    <property type="molecule type" value="Genomic_DNA"/>
</dbReference>
<dbReference type="EMBL" id="CP002687">
    <property type="protein sequence ID" value="AEE83573.1"/>
    <property type="status" value="ALT_SEQ"/>
    <property type="molecule type" value="Genomic_DNA"/>
</dbReference>
<dbReference type="EMBL" id="BK001013">
    <property type="protein sequence ID" value="DAA00882.1"/>
    <property type="molecule type" value="Genomic_DNA"/>
</dbReference>
<dbReference type="RefSeq" id="NP_001190737.1">
    <property type="nucleotide sequence ID" value="NM_001203808.2"/>
</dbReference>
<dbReference type="RefSeq" id="NP_001319945.1">
    <molecule id="Q7PC82-1"/>
    <property type="nucleotide sequence ID" value="NM_001341013.1"/>
</dbReference>
<dbReference type="SMR" id="Q7PC82"/>
<dbReference type="FunCoup" id="Q7PC82">
    <property type="interactions" value="199"/>
</dbReference>
<dbReference type="STRING" id="3702.Q7PC82"/>
<dbReference type="PaxDb" id="3702-AT4G15233.2"/>
<dbReference type="ProteomicsDB" id="244585">
    <molecule id="Q7PC82-1"/>
</dbReference>
<dbReference type="EnsemblPlants" id="AT4G15233.1">
    <molecule id="Q7PC82-1"/>
    <property type="protein sequence ID" value="AT4G15233.1"/>
    <property type="gene ID" value="AT4G15233"/>
</dbReference>
<dbReference type="GeneID" id="827188"/>
<dbReference type="Gramene" id="AT4G15233.1">
    <molecule id="Q7PC82-1"/>
    <property type="protein sequence ID" value="AT4G15233.1"/>
    <property type="gene ID" value="AT4G15233"/>
</dbReference>
<dbReference type="KEGG" id="ath:AT4G15233"/>
<dbReference type="Araport" id="AT4G15233"/>
<dbReference type="TAIR" id="AT4G15233">
    <property type="gene designation" value="ABCG42"/>
</dbReference>
<dbReference type="eggNOG" id="KOG0065">
    <property type="taxonomic scope" value="Eukaryota"/>
</dbReference>
<dbReference type="HOGENOM" id="CLU_000604_35_6_1"/>
<dbReference type="InParanoid" id="Q7PC82"/>
<dbReference type="PRO" id="PR:Q7PC82"/>
<dbReference type="Proteomes" id="UP000006548">
    <property type="component" value="Chromosome 4"/>
</dbReference>
<dbReference type="ExpressionAtlas" id="Q7PC82">
    <property type="expression patterns" value="baseline and differential"/>
</dbReference>
<dbReference type="GO" id="GO:0005886">
    <property type="term" value="C:plasma membrane"/>
    <property type="evidence" value="ECO:0007669"/>
    <property type="project" value="UniProtKB-ARBA"/>
</dbReference>
<dbReference type="GO" id="GO:0140359">
    <property type="term" value="F:ABC-type transporter activity"/>
    <property type="evidence" value="ECO:0007669"/>
    <property type="project" value="InterPro"/>
</dbReference>
<dbReference type="GO" id="GO:0005524">
    <property type="term" value="F:ATP binding"/>
    <property type="evidence" value="ECO:0007669"/>
    <property type="project" value="UniProtKB-KW"/>
</dbReference>
<dbReference type="GO" id="GO:0016887">
    <property type="term" value="F:ATP hydrolysis activity"/>
    <property type="evidence" value="ECO:0007669"/>
    <property type="project" value="InterPro"/>
</dbReference>
<dbReference type="CDD" id="cd03232">
    <property type="entry name" value="ABCG_PDR_domain2"/>
    <property type="match status" value="1"/>
</dbReference>
<dbReference type="FunFam" id="3.40.50.300:FF:000157">
    <property type="entry name" value="ABC transporter G family member 34"/>
    <property type="match status" value="1"/>
</dbReference>
<dbReference type="FunFam" id="3.40.50.300:FF:000532">
    <property type="entry name" value="ABC transporter G family member 34"/>
    <property type="match status" value="1"/>
</dbReference>
<dbReference type="Gene3D" id="3.40.50.300">
    <property type="entry name" value="P-loop containing nucleotide triphosphate hydrolases"/>
    <property type="match status" value="2"/>
</dbReference>
<dbReference type="InterPro" id="IPR003593">
    <property type="entry name" value="AAA+_ATPase"/>
</dbReference>
<dbReference type="InterPro" id="IPR013525">
    <property type="entry name" value="ABC2_TM"/>
</dbReference>
<dbReference type="InterPro" id="IPR003439">
    <property type="entry name" value="ABC_transporter-like_ATP-bd"/>
</dbReference>
<dbReference type="InterPro" id="IPR043926">
    <property type="entry name" value="ABCG_dom"/>
</dbReference>
<dbReference type="InterPro" id="IPR034003">
    <property type="entry name" value="ABCG_PDR_2"/>
</dbReference>
<dbReference type="InterPro" id="IPR027417">
    <property type="entry name" value="P-loop_NTPase"/>
</dbReference>
<dbReference type="InterPro" id="IPR013581">
    <property type="entry name" value="PDR_assoc"/>
</dbReference>
<dbReference type="PANTHER" id="PTHR19241">
    <property type="entry name" value="ATP-BINDING CASSETTE TRANSPORTER"/>
    <property type="match status" value="1"/>
</dbReference>
<dbReference type="Pfam" id="PF01061">
    <property type="entry name" value="ABC2_membrane"/>
    <property type="match status" value="2"/>
</dbReference>
<dbReference type="Pfam" id="PF19055">
    <property type="entry name" value="ABC2_membrane_7"/>
    <property type="match status" value="1"/>
</dbReference>
<dbReference type="Pfam" id="PF00005">
    <property type="entry name" value="ABC_tran"/>
    <property type="match status" value="2"/>
</dbReference>
<dbReference type="Pfam" id="PF08370">
    <property type="entry name" value="PDR_assoc"/>
    <property type="match status" value="1"/>
</dbReference>
<dbReference type="SMART" id="SM00382">
    <property type="entry name" value="AAA"/>
    <property type="match status" value="2"/>
</dbReference>
<dbReference type="SUPFAM" id="SSF52540">
    <property type="entry name" value="P-loop containing nucleoside triphosphate hydrolases"/>
    <property type="match status" value="2"/>
</dbReference>
<dbReference type="PROSITE" id="PS50893">
    <property type="entry name" value="ABC_TRANSPORTER_2"/>
    <property type="match status" value="2"/>
</dbReference>
<proteinExistence type="evidence at transcript level"/>
<feature type="chain" id="PRO_0000234641" description="ABC transporter G family member 42">
    <location>
        <begin position="1"/>
        <end position="1392"/>
    </location>
</feature>
<feature type="transmembrane region" description="Helical" evidence="2">
    <location>
        <begin position="509"/>
        <end position="529"/>
    </location>
</feature>
<feature type="transmembrane region" description="Helical" evidence="2">
    <location>
        <begin position="543"/>
        <end position="563"/>
    </location>
</feature>
<feature type="transmembrane region" description="Helical" evidence="2">
    <location>
        <begin position="596"/>
        <end position="616"/>
    </location>
</feature>
<feature type="transmembrane region" description="Helical" evidence="2">
    <location>
        <begin position="627"/>
        <end position="647"/>
    </location>
</feature>
<feature type="transmembrane region" description="Helical" evidence="2">
    <location>
        <begin position="652"/>
        <end position="672"/>
    </location>
</feature>
<feature type="transmembrane region" description="Helical" evidence="2">
    <location>
        <begin position="739"/>
        <end position="759"/>
    </location>
</feature>
<feature type="transmembrane region" description="Helical" evidence="2">
    <location>
        <begin position="1136"/>
        <end position="1156"/>
    </location>
</feature>
<feature type="transmembrane region" description="Helical" evidence="2">
    <location>
        <begin position="1175"/>
        <end position="1195"/>
    </location>
</feature>
<feature type="transmembrane region" description="Helical" evidence="2">
    <location>
        <begin position="1215"/>
        <end position="1237"/>
    </location>
</feature>
<feature type="transmembrane region" description="Helical" evidence="2">
    <location>
        <begin position="1255"/>
        <end position="1275"/>
    </location>
</feature>
<feature type="transmembrane region" description="Helical" evidence="2">
    <location>
        <begin position="1281"/>
        <end position="1301"/>
    </location>
</feature>
<feature type="transmembrane region" description="Helical" evidence="2">
    <location>
        <begin position="1309"/>
        <end position="1329"/>
    </location>
</feature>
<feature type="transmembrane region" description="Helical" evidence="2">
    <location>
        <begin position="1364"/>
        <end position="1384"/>
    </location>
</feature>
<feature type="domain" description="ABC transporter 1" evidence="3">
    <location>
        <begin position="139"/>
        <end position="413"/>
    </location>
</feature>
<feature type="domain" description="ABC transmembrane type-2 1">
    <location>
        <begin position="491"/>
        <end position="703"/>
    </location>
</feature>
<feature type="domain" description="ABC transporter 2" evidence="3">
    <location>
        <begin position="800"/>
        <end position="1045"/>
    </location>
</feature>
<feature type="domain" description="ABC transmembrane type-2 2">
    <location>
        <begin position="1117"/>
        <end position="1331"/>
    </location>
</feature>
<feature type="region of interest" description="Disordered" evidence="4">
    <location>
        <begin position="1"/>
        <end position="26"/>
    </location>
</feature>
<feature type="compositionally biased region" description="Polar residues" evidence="4">
    <location>
        <begin position="1"/>
        <end position="18"/>
    </location>
</feature>
<feature type="binding site" evidence="3">
    <location>
        <begin position="173"/>
        <end position="180"/>
    </location>
    <ligand>
        <name>ATP</name>
        <dbReference type="ChEBI" id="CHEBI:30616"/>
        <label>1</label>
    </ligand>
</feature>
<feature type="binding site" evidence="3">
    <location>
        <begin position="837"/>
        <end position="844"/>
    </location>
    <ligand>
        <name>ATP</name>
        <dbReference type="ChEBI" id="CHEBI:30616"/>
        <label>2</label>
    </ligand>
</feature>
<gene>
    <name type="primary">ABCG42</name>
    <name type="synonym">PDR14</name>
    <name type="ordered locus">At4g15233</name>
    <name type="ORF">FCAALL.460</name>
</gene>
<organism>
    <name type="scientific">Arabidopsis thaliana</name>
    <name type="common">Mouse-ear cress</name>
    <dbReference type="NCBI Taxonomy" id="3702"/>
    <lineage>
        <taxon>Eukaryota</taxon>
        <taxon>Viridiplantae</taxon>
        <taxon>Streptophyta</taxon>
        <taxon>Embryophyta</taxon>
        <taxon>Tracheophyta</taxon>
        <taxon>Spermatophyta</taxon>
        <taxon>Magnoliopsida</taxon>
        <taxon>eudicotyledons</taxon>
        <taxon>Gunneridae</taxon>
        <taxon>Pentapetalae</taxon>
        <taxon>rosids</taxon>
        <taxon>malvids</taxon>
        <taxon>Brassicales</taxon>
        <taxon>Brassicaceae</taxon>
        <taxon>Camelineae</taxon>
        <taxon>Arabidopsis</taxon>
    </lineage>
</organism>
<reference key="1">
    <citation type="journal article" date="1999" name="Nature">
        <title>Sequence and analysis of chromosome 4 of the plant Arabidopsis thaliana.</title>
        <authorList>
            <person name="Mayer K.F.X."/>
            <person name="Schueller C."/>
            <person name="Wambutt R."/>
            <person name="Murphy G."/>
            <person name="Volckaert G."/>
            <person name="Pohl T."/>
            <person name="Duesterhoeft A."/>
            <person name="Stiekema W."/>
            <person name="Entian K.-D."/>
            <person name="Terryn N."/>
            <person name="Harris B."/>
            <person name="Ansorge W."/>
            <person name="Brandt P."/>
            <person name="Grivell L.A."/>
            <person name="Rieger M."/>
            <person name="Weichselgartner M."/>
            <person name="de Simone V."/>
            <person name="Obermaier B."/>
            <person name="Mache R."/>
            <person name="Mueller M."/>
            <person name="Kreis M."/>
            <person name="Delseny M."/>
            <person name="Puigdomenech P."/>
            <person name="Watson M."/>
            <person name="Schmidtheini T."/>
            <person name="Reichert B."/>
            <person name="Portetelle D."/>
            <person name="Perez-Alonso M."/>
            <person name="Boutry M."/>
            <person name="Bancroft I."/>
            <person name="Vos P."/>
            <person name="Hoheisel J."/>
            <person name="Zimmermann W."/>
            <person name="Wedler H."/>
            <person name="Ridley P."/>
            <person name="Langham S.-A."/>
            <person name="McCullagh B."/>
            <person name="Bilham L."/>
            <person name="Robben J."/>
            <person name="van der Schueren J."/>
            <person name="Grymonprez B."/>
            <person name="Chuang Y.-J."/>
            <person name="Vandenbussche F."/>
            <person name="Braeken M."/>
            <person name="Weltjens I."/>
            <person name="Voet M."/>
            <person name="Bastiaens I."/>
            <person name="Aert R."/>
            <person name="Defoor E."/>
            <person name="Weitzenegger T."/>
            <person name="Bothe G."/>
            <person name="Ramsperger U."/>
            <person name="Hilbert H."/>
            <person name="Braun M."/>
            <person name="Holzer E."/>
            <person name="Brandt A."/>
            <person name="Peters S."/>
            <person name="van Staveren M."/>
            <person name="Dirkse W."/>
            <person name="Mooijman P."/>
            <person name="Klein Lankhorst R."/>
            <person name="Rose M."/>
            <person name="Hauf J."/>
            <person name="Koetter P."/>
            <person name="Berneiser S."/>
            <person name="Hempel S."/>
            <person name="Feldpausch M."/>
            <person name="Lamberth S."/>
            <person name="Van den Daele H."/>
            <person name="De Keyser A."/>
            <person name="Buysshaert C."/>
            <person name="Gielen J."/>
            <person name="Villarroel R."/>
            <person name="De Clercq R."/>
            <person name="van Montagu M."/>
            <person name="Rogers J."/>
            <person name="Cronin A."/>
            <person name="Quail M.A."/>
            <person name="Bray-Allen S."/>
            <person name="Clark L."/>
            <person name="Doggett J."/>
            <person name="Hall S."/>
            <person name="Kay M."/>
            <person name="Lennard N."/>
            <person name="McLay K."/>
            <person name="Mayes R."/>
            <person name="Pettett A."/>
            <person name="Rajandream M.A."/>
            <person name="Lyne M."/>
            <person name="Benes V."/>
            <person name="Rechmann S."/>
            <person name="Borkova D."/>
            <person name="Bloecker H."/>
            <person name="Scharfe M."/>
            <person name="Grimm M."/>
            <person name="Loehnert T.-H."/>
            <person name="Dose S."/>
            <person name="de Haan M."/>
            <person name="Maarse A.C."/>
            <person name="Schaefer M."/>
            <person name="Mueller-Auer S."/>
            <person name="Gabel C."/>
            <person name="Fuchs M."/>
            <person name="Fartmann B."/>
            <person name="Granderath K."/>
            <person name="Dauner D."/>
            <person name="Herzl A."/>
            <person name="Neumann S."/>
            <person name="Argiriou A."/>
            <person name="Vitale D."/>
            <person name="Liguori R."/>
            <person name="Piravandi E."/>
            <person name="Massenet O."/>
            <person name="Quigley F."/>
            <person name="Clabauld G."/>
            <person name="Muendlein A."/>
            <person name="Felber R."/>
            <person name="Schnabl S."/>
            <person name="Hiller R."/>
            <person name="Schmidt W."/>
            <person name="Lecharny A."/>
            <person name="Aubourg S."/>
            <person name="Chefdor F."/>
            <person name="Cooke R."/>
            <person name="Berger C."/>
            <person name="Monfort A."/>
            <person name="Casacuberta E."/>
            <person name="Gibbons T."/>
            <person name="Weber N."/>
            <person name="Vandenbol M."/>
            <person name="Bargues M."/>
            <person name="Terol J."/>
            <person name="Torres A."/>
            <person name="Perez-Perez A."/>
            <person name="Purnelle B."/>
            <person name="Bent E."/>
            <person name="Johnson S."/>
            <person name="Tacon D."/>
            <person name="Jesse T."/>
            <person name="Heijnen L."/>
            <person name="Schwarz S."/>
            <person name="Scholler P."/>
            <person name="Heber S."/>
            <person name="Francs P."/>
            <person name="Bielke C."/>
            <person name="Frishman D."/>
            <person name="Haase D."/>
            <person name="Lemcke K."/>
            <person name="Mewes H.-W."/>
            <person name="Stocker S."/>
            <person name="Zaccaria P."/>
            <person name="Bevan M."/>
            <person name="Wilson R.K."/>
            <person name="de la Bastide M."/>
            <person name="Habermann K."/>
            <person name="Parnell L."/>
            <person name="Dedhia N."/>
            <person name="Gnoj L."/>
            <person name="Schutz K."/>
            <person name="Huang E."/>
            <person name="Spiegel L."/>
            <person name="Sekhon M."/>
            <person name="Murray J."/>
            <person name="Sheet P."/>
            <person name="Cordes M."/>
            <person name="Abu-Threideh J."/>
            <person name="Stoneking T."/>
            <person name="Kalicki J."/>
            <person name="Graves T."/>
            <person name="Harmon G."/>
            <person name="Edwards J."/>
            <person name="Latreille P."/>
            <person name="Courtney L."/>
            <person name="Cloud J."/>
            <person name="Abbott A."/>
            <person name="Scott K."/>
            <person name="Johnson D."/>
            <person name="Minx P."/>
            <person name="Bentley D."/>
            <person name="Fulton B."/>
            <person name="Miller N."/>
            <person name="Greco T."/>
            <person name="Kemp K."/>
            <person name="Kramer J."/>
            <person name="Fulton L."/>
            <person name="Mardis E."/>
            <person name="Dante M."/>
            <person name="Pepin K."/>
            <person name="Hillier L.W."/>
            <person name="Nelson J."/>
            <person name="Spieth J."/>
            <person name="Ryan E."/>
            <person name="Andrews S."/>
            <person name="Geisel C."/>
            <person name="Layman D."/>
            <person name="Du H."/>
            <person name="Ali J."/>
            <person name="Berghoff A."/>
            <person name="Jones K."/>
            <person name="Drone K."/>
            <person name="Cotton M."/>
            <person name="Joshu C."/>
            <person name="Antonoiu B."/>
            <person name="Zidanic M."/>
            <person name="Strong C."/>
            <person name="Sun H."/>
            <person name="Lamar B."/>
            <person name="Yordan C."/>
            <person name="Ma P."/>
            <person name="Zhong J."/>
            <person name="Preston R."/>
            <person name="Vil D."/>
            <person name="Shekher M."/>
            <person name="Matero A."/>
            <person name="Shah R."/>
            <person name="Swaby I.K."/>
            <person name="O'Shaughnessy A."/>
            <person name="Rodriguez M."/>
            <person name="Hoffman J."/>
            <person name="Till S."/>
            <person name="Granat S."/>
            <person name="Shohdy N."/>
            <person name="Hasegawa A."/>
            <person name="Hameed A."/>
            <person name="Lodhi M."/>
            <person name="Johnson A."/>
            <person name="Chen E."/>
            <person name="Marra M.A."/>
            <person name="Martienssen R."/>
            <person name="McCombie W.R."/>
        </authorList>
    </citation>
    <scope>NUCLEOTIDE SEQUENCE [LARGE SCALE GENOMIC DNA]</scope>
    <source>
        <strain>cv. Columbia</strain>
    </source>
</reference>
<reference key="2">
    <citation type="journal article" date="2017" name="Plant J.">
        <title>Araport11: a complete reannotation of the Arabidopsis thaliana reference genome.</title>
        <authorList>
            <person name="Cheng C.Y."/>
            <person name="Krishnakumar V."/>
            <person name="Chan A.P."/>
            <person name="Thibaud-Nissen F."/>
            <person name="Schobel S."/>
            <person name="Town C.D."/>
        </authorList>
    </citation>
    <scope>GENOME REANNOTATION</scope>
    <source>
        <strain>cv. Columbia</strain>
    </source>
</reference>
<reference key="3">
    <citation type="journal article" date="2002" name="Planta">
        <title>The plant PDR family of ABC transporters.</title>
        <authorList>
            <person name="van den Brule S."/>
            <person name="Smart C.C."/>
        </authorList>
    </citation>
    <scope>IDENTIFICATION</scope>
    <scope>TISSUE SPECIFICITY</scope>
</reference>
<reference key="4">
    <citation type="journal article" date="2006" name="FEBS Lett.">
        <title>Organization and function of the plant pleiotropic drug resistance ABC transporter family.</title>
        <authorList>
            <person name="Crouzet J."/>
            <person name="Trombik T."/>
            <person name="Fraysse A.S."/>
            <person name="Boutry M."/>
        </authorList>
    </citation>
    <scope>GENE FAMILY</scope>
    <scope>NOMENCLATURE</scope>
</reference>
<reference key="5">
    <citation type="journal article" date="2008" name="Trends Plant Sci.">
        <title>Plant ABC proteins - a unified nomenclature and updated inventory.</title>
        <authorList>
            <person name="Verrier P.J."/>
            <person name="Bird D."/>
            <person name="Burla B."/>
            <person name="Dassa E."/>
            <person name="Forestier C."/>
            <person name="Geisler M."/>
            <person name="Klein M."/>
            <person name="Kolukisaoglu H.U."/>
            <person name="Lee Y."/>
            <person name="Martinoia E."/>
            <person name="Murphy A."/>
            <person name="Rea P.A."/>
            <person name="Samuels L."/>
            <person name="Schulz B."/>
            <person name="Spalding E.J."/>
            <person name="Yazaki K."/>
            <person name="Theodoulou F.L."/>
        </authorList>
    </citation>
    <scope>GENE FAMILY</scope>
    <scope>NOMENCLATURE</scope>
</reference>
<accession>Q7PC82</accession>
<accession>F4JJF3</accession>
<accession>F4JJF4</accession>
<comment type="function">
    <text evidence="1">May be a general defense protein.</text>
</comment>
<comment type="subcellular location">
    <subcellularLocation>
        <location evidence="1">Membrane</location>
        <topology evidence="1">Multi-pass membrane protein</topology>
    </subcellularLocation>
</comment>
<comment type="alternative products">
    <event type="alternative splicing"/>
    <isoform>
        <id>Q7PC82-1</id>
        <name>1</name>
        <sequence type="displayed"/>
    </isoform>
    <text>A number of isoforms are produced. According to EST sequences.</text>
</comment>
<comment type="tissue specificity">
    <text evidence="5">Confined to shoots.</text>
</comment>
<comment type="similarity">
    <text evidence="6">Belongs to the ABC transporter superfamily. ABCG family. PDR (TC 3.A.1.205) subfamily.</text>
</comment>
<comment type="sequence caution" evidence="6">
    <conflict type="erroneous gene model prediction">
        <sequence resource="EMBL-CDS" id="AEE83573"/>
    </conflict>
</comment>
<evidence type="ECO:0000250" key="1"/>
<evidence type="ECO:0000255" key="2"/>
<evidence type="ECO:0000255" key="3">
    <source>
        <dbReference type="PROSITE-ProRule" id="PRU00434"/>
    </source>
</evidence>
<evidence type="ECO:0000256" key="4">
    <source>
        <dbReference type="SAM" id="MobiDB-lite"/>
    </source>
</evidence>
<evidence type="ECO:0000269" key="5">
    <source>
    </source>
</evidence>
<evidence type="ECO:0000305" key="6"/>
<keyword id="KW-0025">Alternative splicing</keyword>
<keyword id="KW-0067">ATP-binding</keyword>
<keyword id="KW-0472">Membrane</keyword>
<keyword id="KW-0547">Nucleotide-binding</keyword>
<keyword id="KW-1185">Reference proteome</keyword>
<keyword id="KW-0677">Repeat</keyword>
<keyword id="KW-0812">Transmembrane</keyword>
<keyword id="KW-1133">Transmembrane helix</keyword>
<keyword id="KW-0813">Transport</keyword>